<feature type="signal peptide" evidence="1">
    <location>
        <begin position="1"/>
        <end position="21"/>
    </location>
</feature>
<feature type="chain" id="PRO_0000036379" description="Secretoglobin family 1D member 2">
    <location>
        <begin position="22"/>
        <end position="90"/>
    </location>
</feature>
<feature type="sequence variant" id="VAR_020254" description="In dbSNP:rs2232950.">
    <original>P</original>
    <variation>L</variation>
    <location>
        <position position="53"/>
    </location>
</feature>
<feature type="sequence variant" id="VAR_020255" description="In dbSNP:rs2276427.">
    <original>V</original>
    <variation>A</variation>
    <location>
        <position position="80"/>
    </location>
</feature>
<reference key="1">
    <citation type="journal article" date="1999" name="Biochem. Biophys. Res. Commun.">
        <title>Lipophilins: human peptides homologous to rat prostatein.</title>
        <authorList>
            <person name="Zhao C."/>
            <person name="Nguyen T."/>
            <person name="Yusifov T."/>
            <person name="Glasgow B.J."/>
            <person name="Lehrer R.I."/>
        </authorList>
    </citation>
    <scope>NUCLEOTIDE SEQUENCE [MRNA]</scope>
</reference>
<reference key="2">
    <citation type="journal article" date="2004" name="Genome Res.">
        <title>The status, quality, and expansion of the NIH full-length cDNA project: the Mammalian Gene Collection (MGC).</title>
        <authorList>
            <consortium name="The MGC Project Team"/>
        </authorList>
    </citation>
    <scope>NUCLEOTIDE SEQUENCE [LARGE SCALE MRNA]</scope>
    <source>
        <tissue>Brain</tissue>
    </source>
</reference>
<sequence length="90" mass="9925">MKLSVCLLLVTLALCCYQANAEFCPALVSELLDFFFISEPLFKLSLAKFDAPPEAVAAKLGVKRCTDQMSLQKRSLIAEVLVKILKKCSV</sequence>
<evidence type="ECO:0000255" key="1"/>
<evidence type="ECO:0000305" key="2"/>
<accession>O95969</accession>
<accession>Q2M3N9</accession>
<keyword id="KW-1267">Proteomics identification</keyword>
<keyword id="KW-1185">Reference proteome</keyword>
<keyword id="KW-0964">Secreted</keyword>
<keyword id="KW-0732">Signal</keyword>
<name>SG1D2_HUMAN</name>
<comment type="function">
    <text>May bind androgens and other steroids, may also bind estramustine, a chemotherapeutic agent used for prostate cancer. May be under transcriptional regulation of steroid hormones.</text>
</comment>
<comment type="subcellular location">
    <subcellularLocation>
        <location evidence="2">Secreted</location>
    </subcellularLocation>
</comment>
<comment type="tissue specificity">
    <text>Highest expression was found in skeletal muscle. Expressed as well in thymus, trachea, kidney, steroid responsive tissues (prostate, testis, uterus, breast and ovary) and salivary gland.</text>
</comment>
<comment type="similarity">
    <text evidence="2">Belongs to the secretoglobin family. Lipophilin subfamily.</text>
</comment>
<dbReference type="EMBL" id="AJ224172">
    <property type="protein sequence ID" value="CAA11864.1"/>
    <property type="molecule type" value="mRNA"/>
</dbReference>
<dbReference type="EMBL" id="BC069290">
    <property type="protein sequence ID" value="AAH69290.1"/>
    <property type="molecule type" value="mRNA"/>
</dbReference>
<dbReference type="EMBL" id="BC104838">
    <property type="protein sequence ID" value="AAI04839.1"/>
    <property type="molecule type" value="mRNA"/>
</dbReference>
<dbReference type="EMBL" id="BC104840">
    <property type="protein sequence ID" value="AAI04841.1"/>
    <property type="molecule type" value="mRNA"/>
</dbReference>
<dbReference type="CCDS" id="CCDS8017.1"/>
<dbReference type="RefSeq" id="NP_006542.1">
    <property type="nucleotide sequence ID" value="NM_006551.4"/>
</dbReference>
<dbReference type="SMR" id="O95969"/>
<dbReference type="BioGRID" id="115891">
    <property type="interactions" value="31"/>
</dbReference>
<dbReference type="FunCoup" id="O95969">
    <property type="interactions" value="168"/>
</dbReference>
<dbReference type="IntAct" id="O95969">
    <property type="interactions" value="17"/>
</dbReference>
<dbReference type="STRING" id="9606.ENSP00000244926"/>
<dbReference type="BioMuta" id="SCGB1D2"/>
<dbReference type="jPOST" id="O95969"/>
<dbReference type="MassIVE" id="O95969"/>
<dbReference type="PaxDb" id="9606-ENSP00000244926"/>
<dbReference type="PeptideAtlas" id="O95969"/>
<dbReference type="ProteomicsDB" id="51150"/>
<dbReference type="Antibodypedia" id="28420">
    <property type="antibodies" value="142 antibodies from 22 providers"/>
</dbReference>
<dbReference type="DNASU" id="10647"/>
<dbReference type="Ensembl" id="ENST00000244926.4">
    <property type="protein sequence ID" value="ENSP00000244926.3"/>
    <property type="gene ID" value="ENSG00000124935.4"/>
</dbReference>
<dbReference type="GeneID" id="10647"/>
<dbReference type="KEGG" id="hsa:10647"/>
<dbReference type="MANE-Select" id="ENST00000244926.4">
    <property type="protein sequence ID" value="ENSP00000244926.3"/>
    <property type="RefSeq nucleotide sequence ID" value="NM_006551.4"/>
    <property type="RefSeq protein sequence ID" value="NP_006542.1"/>
</dbReference>
<dbReference type="UCSC" id="uc001ntb.4">
    <property type="organism name" value="human"/>
</dbReference>
<dbReference type="AGR" id="HGNC:18396"/>
<dbReference type="CTD" id="10647"/>
<dbReference type="DisGeNET" id="10647"/>
<dbReference type="GeneCards" id="SCGB1D2"/>
<dbReference type="HGNC" id="HGNC:18396">
    <property type="gene designation" value="SCGB1D2"/>
</dbReference>
<dbReference type="HPA" id="ENSG00000124935">
    <property type="expression patterns" value="Group enriched (breast, cervix)"/>
</dbReference>
<dbReference type="MIM" id="615061">
    <property type="type" value="gene"/>
</dbReference>
<dbReference type="neXtProt" id="NX_O95969"/>
<dbReference type="OpenTargets" id="ENSG00000124935"/>
<dbReference type="PharmGKB" id="PA34991"/>
<dbReference type="VEuPathDB" id="HostDB:ENSG00000124935"/>
<dbReference type="eggNOG" id="ENOG502SXZG">
    <property type="taxonomic scope" value="Eukaryota"/>
</dbReference>
<dbReference type="GeneTree" id="ENSGT00530000063866"/>
<dbReference type="HOGENOM" id="CLU_166234_0_0_1"/>
<dbReference type="InParanoid" id="O95969"/>
<dbReference type="OMA" id="KRCTDQM"/>
<dbReference type="OrthoDB" id="9535440at2759"/>
<dbReference type="PAN-GO" id="O95969">
    <property type="GO annotations" value="1 GO annotation based on evolutionary models"/>
</dbReference>
<dbReference type="PhylomeDB" id="O95969"/>
<dbReference type="TreeFam" id="TF338526"/>
<dbReference type="PathwayCommons" id="O95969"/>
<dbReference type="SignaLink" id="O95969"/>
<dbReference type="BioGRID-ORCS" id="10647">
    <property type="hits" value="8 hits in 1104 CRISPR screens"/>
</dbReference>
<dbReference type="ChiTaRS" id="SCGB1D2">
    <property type="organism name" value="human"/>
</dbReference>
<dbReference type="GeneWiki" id="SCGB1D2"/>
<dbReference type="GenomeRNAi" id="10647"/>
<dbReference type="Pharos" id="O95969">
    <property type="development level" value="Tbio"/>
</dbReference>
<dbReference type="PRO" id="PR:O95969"/>
<dbReference type="Proteomes" id="UP000005640">
    <property type="component" value="Chromosome 11"/>
</dbReference>
<dbReference type="RNAct" id="O95969">
    <property type="molecule type" value="protein"/>
</dbReference>
<dbReference type="Bgee" id="ENSG00000124935">
    <property type="expression patterns" value="Expressed in right uterine tube and 110 other cell types or tissues"/>
</dbReference>
<dbReference type="GO" id="GO:0005615">
    <property type="term" value="C:extracellular space"/>
    <property type="evidence" value="ECO:0007005"/>
    <property type="project" value="UniProtKB"/>
</dbReference>
<dbReference type="CDD" id="cd00633">
    <property type="entry name" value="Secretoglobin"/>
    <property type="match status" value="1"/>
</dbReference>
<dbReference type="InterPro" id="IPR016126">
    <property type="entry name" value="Secretoglobin"/>
</dbReference>
<dbReference type="InterPro" id="IPR035960">
    <property type="entry name" value="Secretoglobin_sf"/>
</dbReference>
<dbReference type="PANTHER" id="PTHR11332">
    <property type="entry name" value="SECRETOGLOBIN FAMILY 1D"/>
    <property type="match status" value="1"/>
</dbReference>
<dbReference type="PANTHER" id="PTHR11332:SF10">
    <property type="entry name" value="SECRETOGLOBIN FAMILY 1D MEMBER 2"/>
    <property type="match status" value="1"/>
</dbReference>
<dbReference type="Pfam" id="PF01099">
    <property type="entry name" value="Uteroglobin"/>
    <property type="match status" value="1"/>
</dbReference>
<dbReference type="SUPFAM" id="SSF48201">
    <property type="entry name" value="Uteroglobin-like"/>
    <property type="match status" value="1"/>
</dbReference>
<dbReference type="PROSITE" id="PS51311">
    <property type="entry name" value="SCGB"/>
    <property type="match status" value="1"/>
</dbReference>
<organism>
    <name type="scientific">Homo sapiens</name>
    <name type="common">Human</name>
    <dbReference type="NCBI Taxonomy" id="9606"/>
    <lineage>
        <taxon>Eukaryota</taxon>
        <taxon>Metazoa</taxon>
        <taxon>Chordata</taxon>
        <taxon>Craniata</taxon>
        <taxon>Vertebrata</taxon>
        <taxon>Euteleostomi</taxon>
        <taxon>Mammalia</taxon>
        <taxon>Eutheria</taxon>
        <taxon>Euarchontoglires</taxon>
        <taxon>Primates</taxon>
        <taxon>Haplorrhini</taxon>
        <taxon>Catarrhini</taxon>
        <taxon>Hominidae</taxon>
        <taxon>Homo</taxon>
    </lineage>
</organism>
<gene>
    <name type="primary">SCGB1D2</name>
    <name type="synonym">LIPHB</name>
    <name type="synonym">LPNB</name>
</gene>
<proteinExistence type="evidence at protein level"/>
<protein>
    <recommendedName>
        <fullName>Secretoglobin family 1D member 2</fullName>
    </recommendedName>
    <alternativeName>
        <fullName>Lipophilin-B</fullName>
    </alternativeName>
</protein>